<sequence length="330" mass="36766">MIVVTGAAGFIGSNLVRGLNRRGIQDIIAVDDLTEGDKFLNLVDCQIADYLDKDEFRRRVLAGSLPPLRAVLHQGACSDTTERNGRYMLDNNYRVTLELFEYCQAHAIPFLYASSAAVYGGSSVYVEDPTNERPLNVYGYSKLLFDQVLRTRMKSLTAQVVGLRYFNVYGPHEQHKGRMASVAFHNMNQFLAEGHVRLFAGWDGYADGGQSRDFISVEDVVAVNLHFLDNPGTSGIFNCGTGRAQPFNDVAAAVVNTLREERGEAALPLDKLVEQGLVRYIPFPDDLKGRYQSYTQADVTQLRAAGFAAPMRDVQTGVAEYVRYWRARKA</sequence>
<name>HLDD_BORPD</name>
<accession>A9IJJ7</accession>
<evidence type="ECO:0000255" key="1">
    <source>
        <dbReference type="HAMAP-Rule" id="MF_01601"/>
    </source>
</evidence>
<organism>
    <name type="scientific">Bordetella petrii (strain ATCC BAA-461 / DSM 12804 / CCUG 43448)</name>
    <dbReference type="NCBI Taxonomy" id="340100"/>
    <lineage>
        <taxon>Bacteria</taxon>
        <taxon>Pseudomonadati</taxon>
        <taxon>Pseudomonadota</taxon>
        <taxon>Betaproteobacteria</taxon>
        <taxon>Burkholderiales</taxon>
        <taxon>Alcaligenaceae</taxon>
        <taxon>Bordetella</taxon>
    </lineage>
</organism>
<proteinExistence type="inferred from homology"/>
<reference key="1">
    <citation type="journal article" date="2008" name="BMC Genomics">
        <title>The missing link: Bordetella petrii is endowed with both the metabolic versatility of environmental bacteria and virulence traits of pathogenic Bordetellae.</title>
        <authorList>
            <person name="Gross R."/>
            <person name="Guzman C.A."/>
            <person name="Sebaihia M."/>
            <person name="Martin dos Santos V.A.P."/>
            <person name="Pieper D.H."/>
            <person name="Koebnik R."/>
            <person name="Lechner M."/>
            <person name="Bartels D."/>
            <person name="Buhrmester J."/>
            <person name="Choudhuri J.V."/>
            <person name="Ebensen T."/>
            <person name="Gaigalat L."/>
            <person name="Herrmann S."/>
            <person name="Khachane A.N."/>
            <person name="Larisch C."/>
            <person name="Link S."/>
            <person name="Linke B."/>
            <person name="Meyer F."/>
            <person name="Mormann S."/>
            <person name="Nakunst D."/>
            <person name="Rueckert C."/>
            <person name="Schneiker-Bekel S."/>
            <person name="Schulze K."/>
            <person name="Voerholter F.-J."/>
            <person name="Yevsa T."/>
            <person name="Engle J.T."/>
            <person name="Goldman W.E."/>
            <person name="Puehler A."/>
            <person name="Goebel U.B."/>
            <person name="Goesmann A."/>
            <person name="Bloecker H."/>
            <person name="Kaiser O."/>
            <person name="Martinez-Arias R."/>
        </authorList>
    </citation>
    <scope>NUCLEOTIDE SEQUENCE [LARGE SCALE GENOMIC DNA]</scope>
    <source>
        <strain>ATCC BAA-461 / DSM 12804 / CCUG 43448</strain>
    </source>
</reference>
<comment type="function">
    <text evidence="1">Catalyzes the interconversion between ADP-D-glycero-beta-D-manno-heptose and ADP-L-glycero-beta-D-manno-heptose via an epimerization at carbon 6 of the heptose.</text>
</comment>
<comment type="catalytic activity">
    <reaction evidence="1">
        <text>ADP-D-glycero-beta-D-manno-heptose = ADP-L-glycero-beta-D-manno-heptose</text>
        <dbReference type="Rhea" id="RHEA:17577"/>
        <dbReference type="ChEBI" id="CHEBI:59967"/>
        <dbReference type="ChEBI" id="CHEBI:61506"/>
        <dbReference type="EC" id="5.1.3.20"/>
    </reaction>
</comment>
<comment type="cofactor">
    <cofactor evidence="1">
        <name>NADP(+)</name>
        <dbReference type="ChEBI" id="CHEBI:58349"/>
    </cofactor>
    <text evidence="1">Binds 1 NADP(+) per subunit.</text>
</comment>
<comment type="pathway">
    <text evidence="1">Nucleotide-sugar biosynthesis; ADP-L-glycero-beta-D-manno-heptose biosynthesis; ADP-L-glycero-beta-D-manno-heptose from D-glycero-beta-D-manno-heptose 7-phosphate: step 4/4.</text>
</comment>
<comment type="subunit">
    <text evidence="1">Homopentamer.</text>
</comment>
<comment type="domain">
    <text evidence="1">Contains a large N-terminal NADP-binding domain, and a smaller C-terminal substrate-binding domain.</text>
</comment>
<comment type="similarity">
    <text evidence="1">Belongs to the NAD(P)-dependent epimerase/dehydratase family. HldD subfamily.</text>
</comment>
<protein>
    <recommendedName>
        <fullName evidence="1">ADP-L-glycero-D-manno-heptose-6-epimerase</fullName>
        <ecNumber evidence="1">5.1.3.20</ecNumber>
    </recommendedName>
    <alternativeName>
        <fullName evidence="1">ADP-L-glycero-beta-D-manno-heptose-6-epimerase</fullName>
        <shortName evidence="1">ADP-glyceromanno-heptose 6-epimerase</shortName>
        <shortName evidence="1">ADP-hep 6-epimerase</shortName>
        <shortName evidence="1">AGME</shortName>
    </alternativeName>
</protein>
<dbReference type="EC" id="5.1.3.20" evidence="1"/>
<dbReference type="EMBL" id="AM902716">
    <property type="protein sequence ID" value="CAP42234.1"/>
    <property type="molecule type" value="Genomic_DNA"/>
</dbReference>
<dbReference type="SMR" id="A9IJJ7"/>
<dbReference type="STRING" id="94624.Bpet1895"/>
<dbReference type="KEGG" id="bpt:Bpet1895"/>
<dbReference type="eggNOG" id="COG0451">
    <property type="taxonomic scope" value="Bacteria"/>
</dbReference>
<dbReference type="UniPathway" id="UPA00356">
    <property type="reaction ID" value="UER00440"/>
</dbReference>
<dbReference type="Proteomes" id="UP000001225">
    <property type="component" value="Chromosome"/>
</dbReference>
<dbReference type="GO" id="GO:0008712">
    <property type="term" value="F:ADP-glyceromanno-heptose 6-epimerase activity"/>
    <property type="evidence" value="ECO:0007669"/>
    <property type="project" value="UniProtKB-UniRule"/>
</dbReference>
<dbReference type="GO" id="GO:0050661">
    <property type="term" value="F:NADP binding"/>
    <property type="evidence" value="ECO:0007669"/>
    <property type="project" value="InterPro"/>
</dbReference>
<dbReference type="GO" id="GO:0097171">
    <property type="term" value="P:ADP-L-glycero-beta-D-manno-heptose biosynthetic process"/>
    <property type="evidence" value="ECO:0007669"/>
    <property type="project" value="UniProtKB-UniPathway"/>
</dbReference>
<dbReference type="GO" id="GO:0005975">
    <property type="term" value="P:carbohydrate metabolic process"/>
    <property type="evidence" value="ECO:0007669"/>
    <property type="project" value="UniProtKB-UniRule"/>
</dbReference>
<dbReference type="CDD" id="cd05248">
    <property type="entry name" value="ADP_GME_SDR_e"/>
    <property type="match status" value="1"/>
</dbReference>
<dbReference type="Gene3D" id="3.40.50.720">
    <property type="entry name" value="NAD(P)-binding Rossmann-like Domain"/>
    <property type="match status" value="1"/>
</dbReference>
<dbReference type="Gene3D" id="3.90.25.10">
    <property type="entry name" value="UDP-galactose 4-epimerase, domain 1"/>
    <property type="match status" value="1"/>
</dbReference>
<dbReference type="HAMAP" id="MF_01601">
    <property type="entry name" value="Heptose_epimerase"/>
    <property type="match status" value="1"/>
</dbReference>
<dbReference type="InterPro" id="IPR001509">
    <property type="entry name" value="Epimerase_deHydtase"/>
</dbReference>
<dbReference type="InterPro" id="IPR011912">
    <property type="entry name" value="Heptose_epim"/>
</dbReference>
<dbReference type="InterPro" id="IPR036291">
    <property type="entry name" value="NAD(P)-bd_dom_sf"/>
</dbReference>
<dbReference type="NCBIfam" id="TIGR02197">
    <property type="entry name" value="heptose_epim"/>
    <property type="match status" value="1"/>
</dbReference>
<dbReference type="PANTHER" id="PTHR43103:SF3">
    <property type="entry name" value="ADP-L-GLYCERO-D-MANNO-HEPTOSE-6-EPIMERASE"/>
    <property type="match status" value="1"/>
</dbReference>
<dbReference type="PANTHER" id="PTHR43103">
    <property type="entry name" value="NUCLEOSIDE-DIPHOSPHATE-SUGAR EPIMERASE"/>
    <property type="match status" value="1"/>
</dbReference>
<dbReference type="Pfam" id="PF01370">
    <property type="entry name" value="Epimerase"/>
    <property type="match status" value="1"/>
</dbReference>
<dbReference type="SUPFAM" id="SSF51735">
    <property type="entry name" value="NAD(P)-binding Rossmann-fold domains"/>
    <property type="match status" value="1"/>
</dbReference>
<feature type="chain" id="PRO_1000148065" description="ADP-L-glycero-D-manno-heptose-6-epimerase">
    <location>
        <begin position="1"/>
        <end position="330"/>
    </location>
</feature>
<feature type="active site" description="Proton acceptor" evidence="1">
    <location>
        <position position="138"/>
    </location>
</feature>
<feature type="active site" description="Proton acceptor" evidence="1">
    <location>
        <position position="176"/>
    </location>
</feature>
<feature type="binding site" evidence="1">
    <location>
        <begin position="10"/>
        <end position="11"/>
    </location>
    <ligand>
        <name>NADP(+)</name>
        <dbReference type="ChEBI" id="CHEBI:58349"/>
    </ligand>
</feature>
<feature type="binding site" evidence="1">
    <location>
        <begin position="31"/>
        <end position="32"/>
    </location>
    <ligand>
        <name>NADP(+)</name>
        <dbReference type="ChEBI" id="CHEBI:58349"/>
    </ligand>
</feature>
<feature type="binding site" evidence="1">
    <location>
        <position position="38"/>
    </location>
    <ligand>
        <name>NADP(+)</name>
        <dbReference type="ChEBI" id="CHEBI:58349"/>
    </ligand>
</feature>
<feature type="binding site" evidence="1">
    <location>
        <position position="53"/>
    </location>
    <ligand>
        <name>NADP(+)</name>
        <dbReference type="ChEBI" id="CHEBI:58349"/>
    </ligand>
</feature>
<feature type="binding site" evidence="1">
    <location>
        <begin position="74"/>
        <end position="78"/>
    </location>
    <ligand>
        <name>NADP(+)</name>
        <dbReference type="ChEBI" id="CHEBI:58349"/>
    </ligand>
</feature>
<feature type="binding site" evidence="1">
    <location>
        <position position="91"/>
    </location>
    <ligand>
        <name>NADP(+)</name>
        <dbReference type="ChEBI" id="CHEBI:58349"/>
    </ligand>
</feature>
<feature type="binding site" evidence="1">
    <location>
        <position position="142"/>
    </location>
    <ligand>
        <name>NADP(+)</name>
        <dbReference type="ChEBI" id="CHEBI:58349"/>
    </ligand>
</feature>
<feature type="binding site" evidence="1">
    <location>
        <position position="167"/>
    </location>
    <ligand>
        <name>substrate</name>
    </ligand>
</feature>
<feature type="binding site" evidence="1">
    <location>
        <position position="168"/>
    </location>
    <ligand>
        <name>NADP(+)</name>
        <dbReference type="ChEBI" id="CHEBI:58349"/>
    </ligand>
</feature>
<feature type="binding site" evidence="1">
    <location>
        <position position="176"/>
    </location>
    <ligand>
        <name>NADP(+)</name>
        <dbReference type="ChEBI" id="CHEBI:58349"/>
    </ligand>
</feature>
<feature type="binding site" evidence="1">
    <location>
        <position position="178"/>
    </location>
    <ligand>
        <name>substrate</name>
    </ligand>
</feature>
<feature type="binding site" evidence="1">
    <location>
        <position position="185"/>
    </location>
    <ligand>
        <name>substrate</name>
    </ligand>
</feature>
<feature type="binding site" evidence="1">
    <location>
        <begin position="199"/>
        <end position="202"/>
    </location>
    <ligand>
        <name>substrate</name>
    </ligand>
</feature>
<feature type="binding site" evidence="1">
    <location>
        <position position="212"/>
    </location>
    <ligand>
        <name>substrate</name>
    </ligand>
</feature>
<feature type="binding site" evidence="1">
    <location>
        <position position="291"/>
    </location>
    <ligand>
        <name>substrate</name>
    </ligand>
</feature>
<gene>
    <name evidence="1" type="primary">hldD</name>
    <name type="ordered locus">Bpet1895</name>
</gene>
<keyword id="KW-0119">Carbohydrate metabolism</keyword>
<keyword id="KW-0413">Isomerase</keyword>
<keyword id="KW-0521">NADP</keyword>